<dbReference type="EC" id="5.3.4.1"/>
<dbReference type="EMBL" id="AC126438">
    <property type="status" value="NOT_ANNOTATED_CDS"/>
    <property type="molecule type" value="Genomic_DNA"/>
</dbReference>
<dbReference type="EMBL" id="BC116671">
    <property type="protein sequence ID" value="AAI16672.1"/>
    <property type="molecule type" value="mRNA"/>
</dbReference>
<dbReference type="CCDS" id="CCDS37510.1">
    <molecule id="D3Z6P0-1"/>
</dbReference>
<dbReference type="RefSeq" id="NP_001074539.1">
    <molecule id="D3Z6P0-1"/>
    <property type="nucleotide sequence ID" value="NM_001081070.1"/>
</dbReference>
<dbReference type="SMR" id="D3Z6P0"/>
<dbReference type="BioGRID" id="213283">
    <property type="interactions" value="1"/>
</dbReference>
<dbReference type="FunCoup" id="D3Z6P0">
    <property type="interactions" value="240"/>
</dbReference>
<dbReference type="STRING" id="10090.ENSMUSP00000035584"/>
<dbReference type="GlyCosmos" id="D3Z6P0">
    <property type="glycosylation" value="3 sites, No reported glycans"/>
</dbReference>
<dbReference type="GlyGen" id="D3Z6P0">
    <property type="glycosylation" value="3 sites, 2 N-linked glycans (2 sites)"/>
</dbReference>
<dbReference type="iPTMnet" id="D3Z6P0"/>
<dbReference type="PhosphoSitePlus" id="D3Z6P0"/>
<dbReference type="PaxDb" id="10090-ENSMUSP00000035584"/>
<dbReference type="PeptideAtlas" id="D3Z6P0"/>
<dbReference type="ProteomicsDB" id="288078">
    <molecule id="D3Z6P0-1"/>
</dbReference>
<dbReference type="ProteomicsDB" id="288079">
    <molecule id="D3Z6P0-2"/>
</dbReference>
<dbReference type="Antibodypedia" id="22619">
    <property type="antibodies" value="344 antibodies from 30 providers"/>
</dbReference>
<dbReference type="Ensembl" id="ENSMUST00000039113.14">
    <molecule id="D3Z6P0-1"/>
    <property type="protein sequence ID" value="ENSMUSP00000035584.8"/>
    <property type="gene ID" value="ENSMUSG00000024184.16"/>
</dbReference>
<dbReference type="Ensembl" id="ENSMUST00000120333.8">
    <molecule id="D3Z6P0-2"/>
    <property type="protein sequence ID" value="ENSMUSP00000114080.2"/>
    <property type="gene ID" value="ENSMUSG00000024184.16"/>
</dbReference>
<dbReference type="GeneID" id="69191"/>
<dbReference type="KEGG" id="mmu:69191"/>
<dbReference type="UCSC" id="uc008bdo.1">
    <molecule id="D3Z6P0-1"/>
    <property type="organism name" value="mouse"/>
</dbReference>
<dbReference type="UCSC" id="uc012ans.1">
    <molecule id="D3Z6P0-2"/>
    <property type="organism name" value="mouse"/>
</dbReference>
<dbReference type="AGR" id="MGI:1916441"/>
<dbReference type="CTD" id="64714"/>
<dbReference type="MGI" id="MGI:1916441">
    <property type="gene designation" value="Pdia2"/>
</dbReference>
<dbReference type="VEuPathDB" id="HostDB:ENSMUSG00000024184"/>
<dbReference type="eggNOG" id="KOG0190">
    <property type="taxonomic scope" value="Eukaryota"/>
</dbReference>
<dbReference type="GeneTree" id="ENSGT00940000161859"/>
<dbReference type="HOGENOM" id="CLU_025879_1_0_1"/>
<dbReference type="InParanoid" id="D3Z6P0"/>
<dbReference type="OMA" id="REDYVWS"/>
<dbReference type="OrthoDB" id="72053at2759"/>
<dbReference type="PhylomeDB" id="D3Z6P0"/>
<dbReference type="TreeFam" id="TF106381"/>
<dbReference type="BioGRID-ORCS" id="69191">
    <property type="hits" value="1 hit in 81 CRISPR screens"/>
</dbReference>
<dbReference type="ChiTaRS" id="Pdia2">
    <property type="organism name" value="mouse"/>
</dbReference>
<dbReference type="PRO" id="PR:D3Z6P0"/>
<dbReference type="Proteomes" id="UP000000589">
    <property type="component" value="Chromosome 17"/>
</dbReference>
<dbReference type="RNAct" id="D3Z6P0">
    <property type="molecule type" value="protein"/>
</dbReference>
<dbReference type="Bgee" id="ENSMUSG00000024184">
    <property type="expression patterns" value="Expressed in epithelium of stomach and 67 other cell types or tissues"/>
</dbReference>
<dbReference type="ExpressionAtlas" id="D3Z6P0">
    <property type="expression patterns" value="baseline and differential"/>
</dbReference>
<dbReference type="GO" id="GO:0005788">
    <property type="term" value="C:endoplasmic reticulum lumen"/>
    <property type="evidence" value="ECO:0007669"/>
    <property type="project" value="UniProtKB-SubCell"/>
</dbReference>
<dbReference type="GO" id="GO:0003756">
    <property type="term" value="F:protein disulfide isomerase activity"/>
    <property type="evidence" value="ECO:0000304"/>
    <property type="project" value="MGI"/>
</dbReference>
<dbReference type="GO" id="GO:0015035">
    <property type="term" value="F:protein-disulfide reductase activity"/>
    <property type="evidence" value="ECO:0007669"/>
    <property type="project" value="Ensembl"/>
</dbReference>
<dbReference type="GO" id="GO:0005496">
    <property type="term" value="F:steroid binding"/>
    <property type="evidence" value="ECO:0007669"/>
    <property type="project" value="UniProtKB-KW"/>
</dbReference>
<dbReference type="GO" id="GO:0070527">
    <property type="term" value="P:platelet aggregation"/>
    <property type="evidence" value="ECO:0000315"/>
    <property type="project" value="MGI"/>
</dbReference>
<dbReference type="CDD" id="cd02961">
    <property type="entry name" value="PDI_a_family"/>
    <property type="match status" value="1"/>
</dbReference>
<dbReference type="CDD" id="cd02995">
    <property type="entry name" value="PDI_a_PDI_a'_C"/>
    <property type="match status" value="1"/>
</dbReference>
<dbReference type="CDD" id="cd02982">
    <property type="entry name" value="PDI_b'_family"/>
    <property type="match status" value="1"/>
</dbReference>
<dbReference type="CDD" id="cd02981">
    <property type="entry name" value="PDI_b_family"/>
    <property type="match status" value="1"/>
</dbReference>
<dbReference type="FunFam" id="3.40.30.10:FF:000203">
    <property type="entry name" value="Protein disulfide isomerase family A member 2"/>
    <property type="match status" value="1"/>
</dbReference>
<dbReference type="FunFam" id="3.40.30.10:FF:000023">
    <property type="entry name" value="Protein disulfide-isomerase"/>
    <property type="match status" value="1"/>
</dbReference>
<dbReference type="FunFam" id="3.40.30.10:FF:000027">
    <property type="entry name" value="protein disulfide-isomerase A2"/>
    <property type="match status" value="1"/>
</dbReference>
<dbReference type="FunFam" id="3.40.30.10:FF:000042">
    <property type="entry name" value="protein disulfide-isomerase A2"/>
    <property type="match status" value="1"/>
</dbReference>
<dbReference type="Gene3D" id="3.40.30.10">
    <property type="entry name" value="Glutaredoxin"/>
    <property type="match status" value="4"/>
</dbReference>
<dbReference type="InterPro" id="IPR005792">
    <property type="entry name" value="Prot_disulphide_isomerase"/>
</dbReference>
<dbReference type="InterPro" id="IPR036249">
    <property type="entry name" value="Thioredoxin-like_sf"/>
</dbReference>
<dbReference type="InterPro" id="IPR017937">
    <property type="entry name" value="Thioredoxin_CS"/>
</dbReference>
<dbReference type="InterPro" id="IPR013766">
    <property type="entry name" value="Thioredoxin_domain"/>
</dbReference>
<dbReference type="NCBIfam" id="TIGR01130">
    <property type="entry name" value="ER_PDI_fam"/>
    <property type="match status" value="1"/>
</dbReference>
<dbReference type="PANTHER" id="PTHR18929">
    <property type="entry name" value="PROTEIN DISULFIDE ISOMERASE"/>
    <property type="match status" value="1"/>
</dbReference>
<dbReference type="PANTHER" id="PTHR18929:SF93">
    <property type="entry name" value="PROTEIN DISULFIDE-ISOMERASE A2"/>
    <property type="match status" value="1"/>
</dbReference>
<dbReference type="Pfam" id="PF00085">
    <property type="entry name" value="Thioredoxin"/>
    <property type="match status" value="2"/>
</dbReference>
<dbReference type="Pfam" id="PF13848">
    <property type="entry name" value="Thioredoxin_6"/>
    <property type="match status" value="1"/>
</dbReference>
<dbReference type="PRINTS" id="PR00421">
    <property type="entry name" value="THIOREDOXIN"/>
</dbReference>
<dbReference type="SUPFAM" id="SSF52833">
    <property type="entry name" value="Thioredoxin-like"/>
    <property type="match status" value="4"/>
</dbReference>
<dbReference type="PROSITE" id="PS00014">
    <property type="entry name" value="ER_TARGET"/>
    <property type="match status" value="1"/>
</dbReference>
<dbReference type="PROSITE" id="PS00194">
    <property type="entry name" value="THIOREDOXIN_1"/>
    <property type="match status" value="1"/>
</dbReference>
<dbReference type="PROSITE" id="PS51352">
    <property type="entry name" value="THIOREDOXIN_2"/>
    <property type="match status" value="2"/>
</dbReference>
<gene>
    <name evidence="14" type="primary">Pdia2</name>
    <name evidence="3" type="synonym">Pdip</name>
</gene>
<feature type="signal peptide" evidence="4">
    <location>
        <begin position="1"/>
        <end position="20"/>
    </location>
</feature>
<feature type="chain" id="PRO_0000394671" description="Protein disulfide-isomerase A2" evidence="4">
    <location>
        <begin position="21"/>
        <end position="527"/>
    </location>
</feature>
<feature type="domain" description="Thioredoxin 1" evidence="5">
    <location>
        <begin position="29"/>
        <end position="155"/>
    </location>
</feature>
<feature type="domain" description="Thioredoxin 2" evidence="5">
    <location>
        <begin position="355"/>
        <end position="499"/>
    </location>
</feature>
<feature type="region of interest" description="Disordered" evidence="7">
    <location>
        <begin position="20"/>
        <end position="41"/>
    </location>
</feature>
<feature type="region of interest" description="Disordered" evidence="7">
    <location>
        <begin position="495"/>
        <end position="527"/>
    </location>
</feature>
<feature type="short sequence motif" description="Prevents secretion from ER" evidence="6">
    <location>
        <begin position="524"/>
        <end position="527"/>
    </location>
</feature>
<feature type="active site" description="Nucleophile" evidence="2">
    <location>
        <position position="74"/>
    </location>
</feature>
<feature type="active site" description="Nucleophile" evidence="2">
    <location>
        <position position="77"/>
    </location>
</feature>
<feature type="active site" description="Nucleophile" evidence="3">
    <location>
        <position position="421"/>
    </location>
</feature>
<feature type="active site" description="Nucleophile" evidence="3">
    <location>
        <position position="424"/>
    </location>
</feature>
<feature type="site" description="Contributes to redox potential value" evidence="3">
    <location>
        <position position="75"/>
    </location>
</feature>
<feature type="site" description="Contributes to redox potential value" evidence="3">
    <location>
        <position position="76"/>
    </location>
</feature>
<feature type="site" description="Contributes to redox potential value" evidence="3">
    <location>
        <position position="422"/>
    </location>
</feature>
<feature type="site" description="Contributes to redox potential value" evidence="3">
    <location>
        <position position="423"/>
    </location>
</feature>
<feature type="site" description="Lowers pKa of C-terminal Cys of second active site" evidence="3">
    <location>
        <position position="485"/>
    </location>
</feature>
<feature type="glycosylation site" description="N-linked (GlcNAc...) asparagine" evidence="4">
    <location>
        <position position="130"/>
    </location>
</feature>
<feature type="glycosylation site" description="N-linked (GlcNAc...) asparagine" evidence="4">
    <location>
        <position position="287"/>
    </location>
</feature>
<feature type="glycosylation site" description="N-linked (GlcNAc...) asparagine" evidence="4">
    <location>
        <position position="518"/>
    </location>
</feature>
<feature type="disulfide bond" description="Redox-active" evidence="3 5">
    <location>
        <begin position="74"/>
        <end position="77"/>
    </location>
</feature>
<feature type="disulfide bond" description="Redox-active" evidence="3 5">
    <location>
        <begin position="421"/>
        <end position="424"/>
    </location>
</feature>
<feature type="splice variant" id="VSP_039293" description="In isoform 2." evidence="11">
    <location>
        <begin position="184"/>
        <end position="186"/>
    </location>
</feature>
<organism>
    <name type="scientific">Mus musculus</name>
    <name type="common">Mouse</name>
    <dbReference type="NCBI Taxonomy" id="10090"/>
    <lineage>
        <taxon>Eukaryota</taxon>
        <taxon>Metazoa</taxon>
        <taxon>Chordata</taxon>
        <taxon>Craniata</taxon>
        <taxon>Vertebrata</taxon>
        <taxon>Euteleostomi</taxon>
        <taxon>Mammalia</taxon>
        <taxon>Eutheria</taxon>
        <taxon>Euarchontoglires</taxon>
        <taxon>Glires</taxon>
        <taxon>Rodentia</taxon>
        <taxon>Myomorpha</taxon>
        <taxon>Muroidea</taxon>
        <taxon>Muridae</taxon>
        <taxon>Murinae</taxon>
        <taxon>Mus</taxon>
        <taxon>Mus</taxon>
    </lineage>
</organism>
<comment type="function">
    <text evidence="3">Acts as an intracellular estrogen-binding protein. May be involved in modulating cellular levels and biological functions of estrogens in the pancreas. May act as a chaperone that inhibits aggregation of misfolded proteins (By similarity).</text>
</comment>
<comment type="catalytic activity">
    <reaction evidence="12">
        <text>Catalyzes the rearrangement of -S-S- bonds in proteins.</text>
        <dbReference type="EC" id="5.3.4.1"/>
    </reaction>
</comment>
<comment type="subunit">
    <text evidence="1">Part of a large chaperone multiprotein complex comprising DNAJB11, HSP90B1, HSPA5, HYOU, PDIA2, PDIA4, PDIA6, PPIB, SDF2L1, UGGT1 and very small amounts of ERP29, but not, or at very low levels, CALR nor CANX.</text>
</comment>
<comment type="subcellular location">
    <subcellularLocation>
        <location evidence="3 6">Endoplasmic reticulum lumen</location>
    </subcellularLocation>
</comment>
<comment type="alternative products">
    <event type="alternative splicing"/>
    <isoform>
        <id>D3Z6P0-1</id>
        <name evidence="9">1</name>
        <sequence type="displayed"/>
    </isoform>
    <isoform>
        <id>D3Z6P0-2</id>
        <name evidence="8">2</name>
        <sequence type="described" ref="VSP_039293"/>
    </isoform>
</comment>
<comment type="tissue specificity">
    <text evidence="10">Highly expressed in pancreas.</text>
</comment>
<comment type="PTM">
    <text evidence="10">Glycosylated.</text>
</comment>
<comment type="similarity">
    <text evidence="4">Belongs to the protein disulfide isomerase family.</text>
</comment>
<sequence>MDKQLLPVLLLLLGVSGSWGQGEEPGGPSEVLPEEPTGEEVPKEDGILVLNHRTLSLALQEHSALMVEFYAPWCGHCKELAPEYSKAAALLAAESAVVTLAKVDGPAEPELTKEFEVVGYPTLKFFQNGNRTNPEEYAGPKTAEGIAEWLRRRVGPSATHLEDEEGVQALMAKWDMVVIGFFQDLQGKDMATFLALAKDALDMTFGFTDQPQLFEKFGLTKDTVVLFKKFDEGRADFPVDKETGLDLGDLSRFLVIHSMHLVTEFNSQTSPKIFAAKILNHLLLFVNQTLAQHRELLTDFREAAPPFRGQVLFVMVDVAADNSHVLNYFGLKAEEAPTLRLINVETTKKYAPTGVIAITAASVAAFCQAVLHGEIKHYLLSQEIPPDWDQGPVKTLVSKNFEQVAFDETKNVFVKFYAPWCSHCKEMAPAWEALAEKYKDREDIVIAELDATANELEAFSVLGYPTLKFFPAGPDRKVIDYKSTRDLETFSKFLDSGGHLPKEEPKEPAASAPEAQANSTLGPKEEL</sequence>
<name>PDIA2_MOUSE</name>
<keyword id="KW-0025">Alternative splicing</keyword>
<keyword id="KW-0143">Chaperone</keyword>
<keyword id="KW-1015">Disulfide bond</keyword>
<keyword id="KW-0256">Endoplasmic reticulum</keyword>
<keyword id="KW-0325">Glycoprotein</keyword>
<keyword id="KW-0413">Isomerase</keyword>
<keyword id="KW-0446">Lipid-binding</keyword>
<keyword id="KW-0676">Redox-active center</keyword>
<keyword id="KW-1185">Reference proteome</keyword>
<keyword id="KW-0677">Repeat</keyword>
<keyword id="KW-0732">Signal</keyword>
<keyword id="KW-0754">Steroid-binding</keyword>
<accession>D3Z6P0</accession>
<accession>Q14AV9</accession>
<protein>
    <recommendedName>
        <fullName evidence="3">Protein disulfide-isomerase A2</fullName>
        <ecNumber>5.3.4.1</ecNumber>
    </recommendedName>
    <alternativeName>
        <fullName evidence="3">PDIp</fullName>
    </alternativeName>
</protein>
<proteinExistence type="evidence at protein level"/>
<reference key="1">
    <citation type="journal article" date="2009" name="PLoS Biol.">
        <title>Lineage-specific biology revealed by a finished genome assembly of the mouse.</title>
        <authorList>
            <person name="Church D.M."/>
            <person name="Goodstadt L."/>
            <person name="Hillier L.W."/>
            <person name="Zody M.C."/>
            <person name="Goldstein S."/>
            <person name="She X."/>
            <person name="Bult C.J."/>
            <person name="Agarwala R."/>
            <person name="Cherry J.L."/>
            <person name="DiCuccio M."/>
            <person name="Hlavina W."/>
            <person name="Kapustin Y."/>
            <person name="Meric P."/>
            <person name="Maglott D."/>
            <person name="Birtle Z."/>
            <person name="Marques A.C."/>
            <person name="Graves T."/>
            <person name="Zhou S."/>
            <person name="Teague B."/>
            <person name="Potamousis K."/>
            <person name="Churas C."/>
            <person name="Place M."/>
            <person name="Herschleb J."/>
            <person name="Runnheim R."/>
            <person name="Forrest D."/>
            <person name="Amos-Landgraf J."/>
            <person name="Schwartz D.C."/>
            <person name="Cheng Z."/>
            <person name="Lindblad-Toh K."/>
            <person name="Eichler E.E."/>
            <person name="Ponting C.P."/>
        </authorList>
    </citation>
    <scope>NUCLEOTIDE SEQUENCE [LARGE SCALE GENOMIC DNA]</scope>
    <source>
        <strain>C57BL/6J</strain>
    </source>
</reference>
<reference evidence="12 13" key="2">
    <citation type="journal article" date="2004" name="Genome Res.">
        <title>The status, quality, and expansion of the NIH full-length cDNA project: the Mammalian Gene Collection (MGC).</title>
        <authorList>
            <consortium name="The MGC Project Team"/>
        </authorList>
    </citation>
    <scope>NUCLEOTIDE SEQUENCE [LARGE SCALE MRNA] (ISOFORM 2)</scope>
</reference>
<reference evidence="12" key="3">
    <citation type="journal article" date="1997" name="DNA Cell Biol.">
        <title>Molecular characterization of a pancreas-specific protein disulfide isomerase, PDIp.</title>
        <authorList>
            <person name="Desilva M.G."/>
            <person name="Notkins A.L."/>
            <person name="Lan M.S."/>
        </authorList>
    </citation>
    <scope>TISSUE SPECIFICITY</scope>
    <scope>GLYCOSYLATION</scope>
</reference>
<reference key="4">
    <citation type="journal article" date="2010" name="Cell">
        <title>A tissue-specific atlas of mouse protein phosphorylation and expression.</title>
        <authorList>
            <person name="Huttlin E.L."/>
            <person name="Jedrychowski M.P."/>
            <person name="Elias J.E."/>
            <person name="Goswami T."/>
            <person name="Rad R."/>
            <person name="Beausoleil S.A."/>
            <person name="Villen J."/>
            <person name="Haas W."/>
            <person name="Sowa M.E."/>
            <person name="Gygi S.P."/>
        </authorList>
    </citation>
    <scope>IDENTIFICATION BY MASS SPECTROMETRY [LARGE SCALE ANALYSIS]</scope>
    <source>
        <tissue>Liver</tissue>
        <tissue>Lung</tissue>
        <tissue>Pancreas</tissue>
        <tissue>Spleen</tissue>
    </source>
</reference>
<evidence type="ECO:0000250" key="1"/>
<evidence type="ECO:0000250" key="2">
    <source>
        <dbReference type="UniProtKB" id="P07237"/>
    </source>
</evidence>
<evidence type="ECO:0000250" key="3">
    <source>
        <dbReference type="UniProtKB" id="Q13087"/>
    </source>
</evidence>
<evidence type="ECO:0000255" key="4"/>
<evidence type="ECO:0000255" key="5">
    <source>
        <dbReference type="PROSITE-ProRule" id="PRU00691"/>
    </source>
</evidence>
<evidence type="ECO:0000255" key="6">
    <source>
        <dbReference type="PROSITE-ProRule" id="PRU10138"/>
    </source>
</evidence>
<evidence type="ECO:0000256" key="7">
    <source>
        <dbReference type="SAM" id="MobiDB-lite"/>
    </source>
</evidence>
<evidence type="ECO:0000269" key="8">
    <source>
    </source>
</evidence>
<evidence type="ECO:0000269" key="9">
    <source>
    </source>
</evidence>
<evidence type="ECO:0000269" key="10">
    <source>
    </source>
</evidence>
<evidence type="ECO:0000303" key="11">
    <source>
    </source>
</evidence>
<evidence type="ECO:0000305" key="12"/>
<evidence type="ECO:0000312" key="13">
    <source>
        <dbReference type="EMBL" id="AAI16672.1"/>
    </source>
</evidence>
<evidence type="ECO:0000312" key="14">
    <source>
        <dbReference type="MGI" id="MGI:1916441"/>
    </source>
</evidence>